<proteinExistence type="inferred from homology"/>
<feature type="chain" id="PRO_0000102287" description="Lipoyl synthase">
    <location>
        <begin position="1"/>
        <end position="303"/>
    </location>
</feature>
<feature type="domain" description="Radical SAM core" evidence="2">
    <location>
        <begin position="53"/>
        <end position="269"/>
    </location>
</feature>
<feature type="binding site" evidence="1">
    <location>
        <position position="40"/>
    </location>
    <ligand>
        <name>[4Fe-4S] cluster</name>
        <dbReference type="ChEBI" id="CHEBI:49883"/>
        <label>1</label>
    </ligand>
</feature>
<feature type="binding site" evidence="1">
    <location>
        <position position="45"/>
    </location>
    <ligand>
        <name>[4Fe-4S] cluster</name>
        <dbReference type="ChEBI" id="CHEBI:49883"/>
        <label>1</label>
    </ligand>
</feature>
<feature type="binding site" evidence="1">
    <location>
        <position position="51"/>
    </location>
    <ligand>
        <name>[4Fe-4S] cluster</name>
        <dbReference type="ChEBI" id="CHEBI:49883"/>
        <label>1</label>
    </ligand>
</feature>
<feature type="binding site" evidence="1">
    <location>
        <position position="67"/>
    </location>
    <ligand>
        <name>[4Fe-4S] cluster</name>
        <dbReference type="ChEBI" id="CHEBI:49883"/>
        <label>2</label>
        <note>4Fe-4S-S-AdoMet</note>
    </ligand>
</feature>
<feature type="binding site" evidence="1">
    <location>
        <position position="71"/>
    </location>
    <ligand>
        <name>[4Fe-4S] cluster</name>
        <dbReference type="ChEBI" id="CHEBI:49883"/>
        <label>2</label>
        <note>4Fe-4S-S-AdoMet</note>
    </ligand>
</feature>
<feature type="binding site" evidence="1">
    <location>
        <position position="74"/>
    </location>
    <ligand>
        <name>[4Fe-4S] cluster</name>
        <dbReference type="ChEBI" id="CHEBI:49883"/>
        <label>2</label>
        <note>4Fe-4S-S-AdoMet</note>
    </ligand>
</feature>
<feature type="binding site" evidence="1">
    <location>
        <position position="280"/>
    </location>
    <ligand>
        <name>[4Fe-4S] cluster</name>
        <dbReference type="ChEBI" id="CHEBI:49883"/>
        <label>1</label>
    </ligand>
</feature>
<dbReference type="EC" id="2.8.1.8" evidence="1"/>
<dbReference type="EMBL" id="BA000004">
    <property type="protein sequence ID" value="BAB07154.1"/>
    <property type="molecule type" value="Genomic_DNA"/>
</dbReference>
<dbReference type="PIR" id="C84079">
    <property type="entry name" value="C84079"/>
</dbReference>
<dbReference type="SMR" id="Q9K7C9"/>
<dbReference type="STRING" id="272558.gene:10729348"/>
<dbReference type="KEGG" id="bha:BH3435"/>
<dbReference type="eggNOG" id="COG0320">
    <property type="taxonomic scope" value="Bacteria"/>
</dbReference>
<dbReference type="HOGENOM" id="CLU_033144_2_1_9"/>
<dbReference type="Proteomes" id="UP000001258">
    <property type="component" value="Chromosome"/>
</dbReference>
<dbReference type="GO" id="GO:0005737">
    <property type="term" value="C:cytoplasm"/>
    <property type="evidence" value="ECO:0007669"/>
    <property type="project" value="UniProtKB-SubCell"/>
</dbReference>
<dbReference type="GO" id="GO:0051539">
    <property type="term" value="F:4 iron, 4 sulfur cluster binding"/>
    <property type="evidence" value="ECO:0007669"/>
    <property type="project" value="UniProtKB-UniRule"/>
</dbReference>
<dbReference type="GO" id="GO:0016992">
    <property type="term" value="F:lipoate synthase activity"/>
    <property type="evidence" value="ECO:0007669"/>
    <property type="project" value="UniProtKB-UniRule"/>
</dbReference>
<dbReference type="GO" id="GO:0046872">
    <property type="term" value="F:metal ion binding"/>
    <property type="evidence" value="ECO:0007669"/>
    <property type="project" value="UniProtKB-KW"/>
</dbReference>
<dbReference type="CDD" id="cd01335">
    <property type="entry name" value="Radical_SAM"/>
    <property type="match status" value="1"/>
</dbReference>
<dbReference type="FunFam" id="3.20.20.70:FF:000040">
    <property type="entry name" value="Lipoyl synthase"/>
    <property type="match status" value="1"/>
</dbReference>
<dbReference type="Gene3D" id="3.20.20.70">
    <property type="entry name" value="Aldolase class I"/>
    <property type="match status" value="1"/>
</dbReference>
<dbReference type="HAMAP" id="MF_00206">
    <property type="entry name" value="Lipoyl_synth"/>
    <property type="match status" value="1"/>
</dbReference>
<dbReference type="InterPro" id="IPR013785">
    <property type="entry name" value="Aldolase_TIM"/>
</dbReference>
<dbReference type="InterPro" id="IPR006638">
    <property type="entry name" value="Elp3/MiaA/NifB-like_rSAM"/>
</dbReference>
<dbReference type="InterPro" id="IPR031691">
    <property type="entry name" value="LIAS_N"/>
</dbReference>
<dbReference type="InterPro" id="IPR003698">
    <property type="entry name" value="Lipoyl_synth"/>
</dbReference>
<dbReference type="InterPro" id="IPR007197">
    <property type="entry name" value="rSAM"/>
</dbReference>
<dbReference type="NCBIfam" id="TIGR00510">
    <property type="entry name" value="lipA"/>
    <property type="match status" value="1"/>
</dbReference>
<dbReference type="NCBIfam" id="NF004019">
    <property type="entry name" value="PRK05481.1"/>
    <property type="match status" value="1"/>
</dbReference>
<dbReference type="NCBIfam" id="NF009544">
    <property type="entry name" value="PRK12928.1"/>
    <property type="match status" value="1"/>
</dbReference>
<dbReference type="PANTHER" id="PTHR10949">
    <property type="entry name" value="LIPOYL SYNTHASE"/>
    <property type="match status" value="1"/>
</dbReference>
<dbReference type="PANTHER" id="PTHR10949:SF0">
    <property type="entry name" value="LIPOYL SYNTHASE, MITOCHONDRIAL"/>
    <property type="match status" value="1"/>
</dbReference>
<dbReference type="Pfam" id="PF16881">
    <property type="entry name" value="LIAS_N"/>
    <property type="match status" value="1"/>
</dbReference>
<dbReference type="Pfam" id="PF04055">
    <property type="entry name" value="Radical_SAM"/>
    <property type="match status" value="1"/>
</dbReference>
<dbReference type="PIRSF" id="PIRSF005963">
    <property type="entry name" value="Lipoyl_synth"/>
    <property type="match status" value="1"/>
</dbReference>
<dbReference type="SFLD" id="SFLDF00271">
    <property type="entry name" value="lipoyl_synthase"/>
    <property type="match status" value="1"/>
</dbReference>
<dbReference type="SFLD" id="SFLDS00029">
    <property type="entry name" value="Radical_SAM"/>
    <property type="match status" value="1"/>
</dbReference>
<dbReference type="SMART" id="SM00729">
    <property type="entry name" value="Elp3"/>
    <property type="match status" value="1"/>
</dbReference>
<dbReference type="SUPFAM" id="SSF102114">
    <property type="entry name" value="Radical SAM enzymes"/>
    <property type="match status" value="1"/>
</dbReference>
<dbReference type="PROSITE" id="PS51918">
    <property type="entry name" value="RADICAL_SAM"/>
    <property type="match status" value="1"/>
</dbReference>
<organism>
    <name type="scientific">Halalkalibacterium halodurans (strain ATCC BAA-125 / DSM 18197 / FERM 7344 / JCM 9153 / C-125)</name>
    <name type="common">Bacillus halodurans</name>
    <dbReference type="NCBI Taxonomy" id="272558"/>
    <lineage>
        <taxon>Bacteria</taxon>
        <taxon>Bacillati</taxon>
        <taxon>Bacillota</taxon>
        <taxon>Bacilli</taxon>
        <taxon>Bacillales</taxon>
        <taxon>Bacillaceae</taxon>
        <taxon>Halalkalibacterium (ex Joshi et al. 2022)</taxon>
    </lineage>
</organism>
<comment type="function">
    <text evidence="1">Catalyzes the radical-mediated insertion of two sulfur atoms into the C-6 and C-8 positions of the octanoyl moiety bound to the lipoyl domains of lipoate-dependent enzymes, thereby converting the octanoylated domains into lipoylated derivatives.</text>
</comment>
<comment type="catalytic activity">
    <reaction evidence="1">
        <text>[[Fe-S] cluster scaffold protein carrying a second [4Fe-4S](2+) cluster] + N(6)-octanoyl-L-lysyl-[protein] + 2 oxidized [2Fe-2S]-[ferredoxin] + 2 S-adenosyl-L-methionine + 4 H(+) = [[Fe-S] cluster scaffold protein] + N(6)-[(R)-dihydrolipoyl]-L-lysyl-[protein] + 4 Fe(3+) + 2 hydrogen sulfide + 2 5'-deoxyadenosine + 2 L-methionine + 2 reduced [2Fe-2S]-[ferredoxin]</text>
        <dbReference type="Rhea" id="RHEA:16585"/>
        <dbReference type="Rhea" id="RHEA-COMP:9928"/>
        <dbReference type="Rhea" id="RHEA-COMP:10000"/>
        <dbReference type="Rhea" id="RHEA-COMP:10001"/>
        <dbReference type="Rhea" id="RHEA-COMP:10475"/>
        <dbReference type="Rhea" id="RHEA-COMP:14568"/>
        <dbReference type="Rhea" id="RHEA-COMP:14569"/>
        <dbReference type="ChEBI" id="CHEBI:15378"/>
        <dbReference type="ChEBI" id="CHEBI:17319"/>
        <dbReference type="ChEBI" id="CHEBI:29034"/>
        <dbReference type="ChEBI" id="CHEBI:29919"/>
        <dbReference type="ChEBI" id="CHEBI:33722"/>
        <dbReference type="ChEBI" id="CHEBI:33737"/>
        <dbReference type="ChEBI" id="CHEBI:33738"/>
        <dbReference type="ChEBI" id="CHEBI:57844"/>
        <dbReference type="ChEBI" id="CHEBI:59789"/>
        <dbReference type="ChEBI" id="CHEBI:78809"/>
        <dbReference type="ChEBI" id="CHEBI:83100"/>
        <dbReference type="EC" id="2.8.1.8"/>
    </reaction>
</comment>
<comment type="cofactor">
    <cofactor evidence="1">
        <name>[4Fe-4S] cluster</name>
        <dbReference type="ChEBI" id="CHEBI:49883"/>
    </cofactor>
    <text evidence="1">Binds 2 [4Fe-4S] clusters per subunit. One cluster is coordinated with 3 cysteines and an exchangeable S-adenosyl-L-methionine.</text>
</comment>
<comment type="pathway">
    <text evidence="1">Protein modification; protein lipoylation via endogenous pathway; protein N(6)-(lipoyl)lysine from octanoyl-[acyl-carrier-protein].</text>
</comment>
<comment type="subcellular location">
    <subcellularLocation>
        <location evidence="1">Cytoplasm</location>
    </subcellularLocation>
</comment>
<comment type="similarity">
    <text evidence="1">Belongs to the radical SAM superfamily. Lipoyl synthase family.</text>
</comment>
<sequence length="303" mass="34533">MAKKEEYVRKPDWLKIKLNTNETYTGLKKMMREKNLHTVCEEAKCPNIHECWAVRKTATFMILGDVCTRACRFCAVKTGLPNELDLQEPERVAESVEIMGLKHAVITAVARDDLKDGGAGVFAETVRAVRRRNPFCTIEVLPSDMMGNDDNLKTLMDARPNILNHNIETVRRLTPRVRARATYERSLEFLRRAKEMQPDIPTKSSLMIGLGETKDEIIETMDDLRANNVDIMTIGQYLQPTKKHLKVQKYYHPDEFAELKEIALSKGFSHCEAGPLVRSSYHADEQVNEAQVREEARKAAAKS</sequence>
<evidence type="ECO:0000255" key="1">
    <source>
        <dbReference type="HAMAP-Rule" id="MF_00206"/>
    </source>
</evidence>
<evidence type="ECO:0000255" key="2">
    <source>
        <dbReference type="PROSITE-ProRule" id="PRU01266"/>
    </source>
</evidence>
<gene>
    <name evidence="1" type="primary">lipA</name>
    <name type="ordered locus">BH3435</name>
</gene>
<name>LIPA_HALH5</name>
<reference key="1">
    <citation type="journal article" date="2000" name="Nucleic Acids Res.">
        <title>Complete genome sequence of the alkaliphilic bacterium Bacillus halodurans and genomic sequence comparison with Bacillus subtilis.</title>
        <authorList>
            <person name="Takami H."/>
            <person name="Nakasone K."/>
            <person name="Takaki Y."/>
            <person name="Maeno G."/>
            <person name="Sasaki R."/>
            <person name="Masui N."/>
            <person name="Fuji F."/>
            <person name="Hirama C."/>
            <person name="Nakamura Y."/>
            <person name="Ogasawara N."/>
            <person name="Kuhara S."/>
            <person name="Horikoshi K."/>
        </authorList>
    </citation>
    <scope>NUCLEOTIDE SEQUENCE [LARGE SCALE GENOMIC DNA]</scope>
    <source>
        <strain>ATCC BAA-125 / DSM 18197 / FERM 7344 / JCM 9153 / C-125</strain>
    </source>
</reference>
<accession>Q9K7C9</accession>
<keyword id="KW-0004">4Fe-4S</keyword>
<keyword id="KW-0963">Cytoplasm</keyword>
<keyword id="KW-0408">Iron</keyword>
<keyword id="KW-0411">Iron-sulfur</keyword>
<keyword id="KW-0479">Metal-binding</keyword>
<keyword id="KW-1185">Reference proteome</keyword>
<keyword id="KW-0949">S-adenosyl-L-methionine</keyword>
<keyword id="KW-0808">Transferase</keyword>
<protein>
    <recommendedName>
        <fullName evidence="1">Lipoyl synthase</fullName>
        <ecNumber evidence="1">2.8.1.8</ecNumber>
    </recommendedName>
    <alternativeName>
        <fullName evidence="1">Lip-syn</fullName>
        <shortName evidence="1">LS</shortName>
    </alternativeName>
    <alternativeName>
        <fullName evidence="1">Lipoate synthase</fullName>
    </alternativeName>
    <alternativeName>
        <fullName evidence="1">Lipoic acid synthase</fullName>
    </alternativeName>
    <alternativeName>
        <fullName evidence="1">Sulfur insertion protein LipA</fullName>
    </alternativeName>
</protein>